<proteinExistence type="evidence at protein level"/>
<feature type="signal peptide" evidence="1">
    <location>
        <begin position="1"/>
        <end position="21"/>
    </location>
</feature>
<feature type="chain" id="PRO_0000433277" description="Receptor-type guanylate cyclase gcy-8" evidence="1">
    <location>
        <begin position="22"/>
        <end position="1152"/>
    </location>
</feature>
<feature type="topological domain" description="Extracellular" evidence="1">
    <location>
        <begin position="22"/>
        <end position="506"/>
    </location>
</feature>
<feature type="transmembrane region" description="Helical" evidence="1">
    <location>
        <begin position="507"/>
        <end position="527"/>
    </location>
</feature>
<feature type="topological domain" description="Cytoplasmic" evidence="1">
    <location>
        <begin position="528"/>
        <end position="1152"/>
    </location>
</feature>
<feature type="domain" description="Protein kinase" evidence="3">
    <location>
        <begin position="567"/>
        <end position="857"/>
    </location>
</feature>
<feature type="domain" description="Guanylate cyclase" evidence="2">
    <location>
        <begin position="927"/>
        <end position="1057"/>
    </location>
</feature>
<feature type="coiled-coil region" evidence="1">
    <location>
        <begin position="861"/>
        <end position="899"/>
    </location>
</feature>
<feature type="binding site" evidence="3">
    <location>
        <begin position="573"/>
        <end position="581"/>
    </location>
    <ligand>
        <name>ATP</name>
        <dbReference type="ChEBI" id="CHEBI:30616"/>
    </ligand>
</feature>
<feature type="binding site" evidence="3">
    <location>
        <position position="593"/>
    </location>
    <ligand>
        <name>ATP</name>
        <dbReference type="ChEBI" id="CHEBI:30616"/>
    </ligand>
</feature>
<feature type="binding site" evidence="2">
    <location>
        <position position="932"/>
    </location>
    <ligand>
        <name>Mg(2+)</name>
        <dbReference type="ChEBI" id="CHEBI:18420"/>
        <label>1</label>
    </ligand>
</feature>
<feature type="binding site" evidence="2">
    <location>
        <position position="932"/>
    </location>
    <ligand>
        <name>Mg(2+)</name>
        <dbReference type="ChEBI" id="CHEBI:18420"/>
        <label>2</label>
    </ligand>
</feature>
<feature type="binding site" evidence="2">
    <location>
        <position position="933"/>
    </location>
    <ligand>
        <name>Mg(2+)</name>
        <dbReference type="ChEBI" id="CHEBI:18420"/>
        <label>2</label>
    </ligand>
</feature>
<feature type="binding site" evidence="2">
    <location>
        <position position="976"/>
    </location>
    <ligand>
        <name>Mg(2+)</name>
        <dbReference type="ChEBI" id="CHEBI:18420"/>
        <label>1</label>
    </ligand>
</feature>
<feature type="binding site" evidence="2">
    <location>
        <position position="976"/>
    </location>
    <ligand>
        <name>Mg(2+)</name>
        <dbReference type="ChEBI" id="CHEBI:18420"/>
        <label>2</label>
    </ligand>
</feature>
<feature type="glycosylation site" description="N-linked (GlcNAc...) asparagine" evidence="4">
    <location>
        <position position="31"/>
    </location>
</feature>
<feature type="glycosylation site" description="N-linked (GlcNAc...) asparagine" evidence="4">
    <location>
        <position position="55"/>
    </location>
</feature>
<feature type="glycosylation site" description="N-linked (GlcNAc...) asparagine" evidence="4">
    <location>
        <position position="385"/>
    </location>
</feature>
<feature type="glycosylation site" description="N-linked (GlcNAc...) asparagine" evidence="4">
    <location>
        <position position="465"/>
    </location>
</feature>
<feature type="mutagenesis site" description="Reduced basal guanylate cyclase activity and reduced chloride sensitivity." evidence="7">
    <original>S</original>
    <variation>E</variation>
    <location>
        <position position="110"/>
    </location>
</feature>
<feature type="mutagenesis site" description="Reduced basal guanylate cyclase activity and reduced chloride sensitivity." evidence="7">
    <original>C</original>
    <variation>S</variation>
    <location>
        <position position="141"/>
    </location>
</feature>
<feature type="mutagenesis site" description="In ns335; enhanced basal guanylate cyclase activity. Exhibits fewer and shorter microvilli of the AFD thermosensory neurons. Defects in thermotaxis." evidence="7">
    <original>G</original>
    <variation>E</variation>
    <location>
        <position position="707"/>
    </location>
</feature>
<feature type="mutagenesis site" description="Enhanced basal guanylate cyclase activity." evidence="7">
    <original>E</original>
    <variation>A</variation>
    <location>
        <position position="1057"/>
    </location>
</feature>
<name>GCY8_CAEEL</name>
<accession>Q9GYQ4</accession>
<accession>Q2L6K7</accession>
<dbReference type="EC" id="4.6.1.2" evidence="7"/>
<dbReference type="EMBL" id="AB201388">
    <property type="protein sequence ID" value="BAE78828.1"/>
    <property type="molecule type" value="mRNA"/>
</dbReference>
<dbReference type="EMBL" id="FO080908">
    <property type="protein sequence ID" value="CCD67714.1"/>
    <property type="molecule type" value="Genomic_DNA"/>
</dbReference>
<dbReference type="RefSeq" id="NP_501324.2">
    <property type="nucleotide sequence ID" value="NM_068923.7"/>
</dbReference>
<dbReference type="SMR" id="Q9GYQ4"/>
<dbReference type="FunCoup" id="Q9GYQ4">
    <property type="interactions" value="65"/>
</dbReference>
<dbReference type="STRING" id="6239.C49H3.1.1"/>
<dbReference type="GlyCosmos" id="Q9GYQ4">
    <property type="glycosylation" value="4 sites, No reported glycans"/>
</dbReference>
<dbReference type="PaxDb" id="6239-C49H3.1"/>
<dbReference type="PeptideAtlas" id="Q9GYQ4"/>
<dbReference type="EnsemblMetazoa" id="C49H3.1.1">
    <property type="protein sequence ID" value="C49H3.1.1"/>
    <property type="gene ID" value="WBGene00001535"/>
</dbReference>
<dbReference type="GeneID" id="177584"/>
<dbReference type="KEGG" id="cel:CELE_C49H3.1"/>
<dbReference type="UCSC" id="C49H3.1">
    <property type="organism name" value="c. elegans"/>
</dbReference>
<dbReference type="AGR" id="WB:WBGene00001535"/>
<dbReference type="CTD" id="177584"/>
<dbReference type="WormBase" id="C49H3.1">
    <property type="protein sequence ID" value="CE42080"/>
    <property type="gene ID" value="WBGene00001535"/>
    <property type="gene designation" value="gcy-8"/>
</dbReference>
<dbReference type="eggNOG" id="KOG1023">
    <property type="taxonomic scope" value="Eukaryota"/>
</dbReference>
<dbReference type="HOGENOM" id="CLU_001072_1_3_1"/>
<dbReference type="InParanoid" id="Q9GYQ4"/>
<dbReference type="OMA" id="DYICEQR"/>
<dbReference type="OrthoDB" id="4062651at2759"/>
<dbReference type="PhylomeDB" id="Q9GYQ4"/>
<dbReference type="BRENDA" id="4.6.1.2">
    <property type="organism ID" value="1045"/>
</dbReference>
<dbReference type="Reactome" id="R-CEL-2514859">
    <property type="pathway name" value="Inactivation, recovery and regulation of the phototransduction cascade"/>
</dbReference>
<dbReference type="PRO" id="PR:Q9GYQ4"/>
<dbReference type="Proteomes" id="UP000001940">
    <property type="component" value="Chromosome IV"/>
</dbReference>
<dbReference type="Bgee" id="WBGene00001535">
    <property type="expression patterns" value="Expressed in pharyngeal muscle cell (C elegans) and 3 other cell types or tissues"/>
</dbReference>
<dbReference type="GO" id="GO:0005929">
    <property type="term" value="C:cilium"/>
    <property type="evidence" value="ECO:0007669"/>
    <property type="project" value="UniProtKB-SubCell"/>
</dbReference>
<dbReference type="GO" id="GO:0031528">
    <property type="term" value="C:microvillus membrane"/>
    <property type="evidence" value="ECO:0000314"/>
    <property type="project" value="WormBase"/>
</dbReference>
<dbReference type="GO" id="GO:0044306">
    <property type="term" value="C:neuron projection terminus"/>
    <property type="evidence" value="ECO:0000314"/>
    <property type="project" value="WormBase"/>
</dbReference>
<dbReference type="GO" id="GO:0005886">
    <property type="term" value="C:plasma membrane"/>
    <property type="evidence" value="ECO:0000318"/>
    <property type="project" value="GO_Central"/>
</dbReference>
<dbReference type="GO" id="GO:0005524">
    <property type="term" value="F:ATP binding"/>
    <property type="evidence" value="ECO:0007669"/>
    <property type="project" value="UniProtKB-KW"/>
</dbReference>
<dbReference type="GO" id="GO:0005525">
    <property type="term" value="F:GTP binding"/>
    <property type="evidence" value="ECO:0007669"/>
    <property type="project" value="UniProtKB-KW"/>
</dbReference>
<dbReference type="GO" id="GO:0004383">
    <property type="term" value="F:guanylate cyclase activity"/>
    <property type="evidence" value="ECO:0000314"/>
    <property type="project" value="WormBase"/>
</dbReference>
<dbReference type="GO" id="GO:0046872">
    <property type="term" value="F:metal ion binding"/>
    <property type="evidence" value="ECO:0007669"/>
    <property type="project" value="UniProtKB-KW"/>
</dbReference>
<dbReference type="GO" id="GO:0001653">
    <property type="term" value="F:peptide receptor activity"/>
    <property type="evidence" value="ECO:0000318"/>
    <property type="project" value="GO_Central"/>
</dbReference>
<dbReference type="GO" id="GO:0004672">
    <property type="term" value="F:protein kinase activity"/>
    <property type="evidence" value="ECO:0007669"/>
    <property type="project" value="InterPro"/>
</dbReference>
<dbReference type="GO" id="GO:0006182">
    <property type="term" value="P:cGMP biosynthetic process"/>
    <property type="evidence" value="ECO:0000318"/>
    <property type="project" value="GO_Central"/>
</dbReference>
<dbReference type="GO" id="GO:0016048">
    <property type="term" value="P:detection of temperature stimulus"/>
    <property type="evidence" value="ECO:0000315"/>
    <property type="project" value="UniProtKB"/>
</dbReference>
<dbReference type="GO" id="GO:0035556">
    <property type="term" value="P:intracellular signal transduction"/>
    <property type="evidence" value="ECO:0007669"/>
    <property type="project" value="InterPro"/>
</dbReference>
<dbReference type="GO" id="GO:0032528">
    <property type="term" value="P:microvillus organization"/>
    <property type="evidence" value="ECO:0000315"/>
    <property type="project" value="WormBase"/>
</dbReference>
<dbReference type="GO" id="GO:0007168">
    <property type="term" value="P:receptor guanylyl cyclase signaling pathway"/>
    <property type="evidence" value="ECO:0000250"/>
    <property type="project" value="WormBase"/>
</dbReference>
<dbReference type="GO" id="GO:0040040">
    <property type="term" value="P:thermosensory behavior"/>
    <property type="evidence" value="ECO:0000315"/>
    <property type="project" value="UniProtKB"/>
</dbReference>
<dbReference type="GO" id="GO:0043052">
    <property type="term" value="P:thermotaxis"/>
    <property type="evidence" value="ECO:0000315"/>
    <property type="project" value="UniProtKB"/>
</dbReference>
<dbReference type="CDD" id="cd07302">
    <property type="entry name" value="CHD"/>
    <property type="match status" value="1"/>
</dbReference>
<dbReference type="CDD" id="cd06352">
    <property type="entry name" value="PBP1_NPR_GC-like"/>
    <property type="match status" value="1"/>
</dbReference>
<dbReference type="FunFam" id="3.40.50.2300:FF:001028">
    <property type="match status" value="1"/>
</dbReference>
<dbReference type="FunFam" id="1.10.510.10:FF:000941">
    <property type="entry name" value="Guanylate cyclase"/>
    <property type="match status" value="1"/>
</dbReference>
<dbReference type="FunFam" id="3.30.70.1230:FF:000035">
    <property type="entry name" value="Guanylate cyclase"/>
    <property type="match status" value="1"/>
</dbReference>
<dbReference type="Gene3D" id="3.40.50.2300">
    <property type="match status" value="2"/>
</dbReference>
<dbReference type="Gene3D" id="3.30.70.1230">
    <property type="entry name" value="Nucleotide cyclase"/>
    <property type="match status" value="1"/>
</dbReference>
<dbReference type="Gene3D" id="1.10.510.10">
    <property type="entry name" value="Transferase(Phosphotransferase) domain 1"/>
    <property type="match status" value="1"/>
</dbReference>
<dbReference type="InterPro" id="IPR001054">
    <property type="entry name" value="A/G_cyclase"/>
</dbReference>
<dbReference type="InterPro" id="IPR001828">
    <property type="entry name" value="ANF_lig-bd_rcpt"/>
</dbReference>
<dbReference type="InterPro" id="IPR050401">
    <property type="entry name" value="Cyclic_nucleotide_synthase"/>
</dbReference>
<dbReference type="InterPro" id="IPR011009">
    <property type="entry name" value="Kinase-like_dom_sf"/>
</dbReference>
<dbReference type="InterPro" id="IPR029787">
    <property type="entry name" value="Nucleotide_cyclase"/>
</dbReference>
<dbReference type="InterPro" id="IPR028082">
    <property type="entry name" value="Peripla_BP_I"/>
</dbReference>
<dbReference type="InterPro" id="IPR000719">
    <property type="entry name" value="Prot_kinase_dom"/>
</dbReference>
<dbReference type="InterPro" id="IPR001245">
    <property type="entry name" value="Ser-Thr/Tyr_kinase_cat_dom"/>
</dbReference>
<dbReference type="PANTHER" id="PTHR11920">
    <property type="entry name" value="GUANYLYL CYCLASE"/>
    <property type="match status" value="1"/>
</dbReference>
<dbReference type="PANTHER" id="PTHR11920:SF498">
    <property type="entry name" value="RECEPTOR-TYPE GUANYLATE CYCLASE GCY-8"/>
    <property type="match status" value="1"/>
</dbReference>
<dbReference type="Pfam" id="PF01094">
    <property type="entry name" value="ANF_receptor"/>
    <property type="match status" value="1"/>
</dbReference>
<dbReference type="Pfam" id="PF00211">
    <property type="entry name" value="Guanylate_cyc"/>
    <property type="match status" value="1"/>
</dbReference>
<dbReference type="Pfam" id="PF07714">
    <property type="entry name" value="PK_Tyr_Ser-Thr"/>
    <property type="match status" value="1"/>
</dbReference>
<dbReference type="SMART" id="SM00044">
    <property type="entry name" value="CYCc"/>
    <property type="match status" value="1"/>
</dbReference>
<dbReference type="SUPFAM" id="SSF55073">
    <property type="entry name" value="Nucleotide cyclase"/>
    <property type="match status" value="1"/>
</dbReference>
<dbReference type="SUPFAM" id="SSF53822">
    <property type="entry name" value="Periplasmic binding protein-like I"/>
    <property type="match status" value="1"/>
</dbReference>
<dbReference type="SUPFAM" id="SSF56112">
    <property type="entry name" value="Protein kinase-like (PK-like)"/>
    <property type="match status" value="1"/>
</dbReference>
<dbReference type="PROSITE" id="PS50125">
    <property type="entry name" value="GUANYLATE_CYCLASE_2"/>
    <property type="match status" value="1"/>
</dbReference>
<dbReference type="PROSITE" id="PS50011">
    <property type="entry name" value="PROTEIN_KINASE_DOM"/>
    <property type="match status" value="1"/>
</dbReference>
<evidence type="ECO:0000255" key="1"/>
<evidence type="ECO:0000255" key="2">
    <source>
        <dbReference type="PROSITE-ProRule" id="PRU00099"/>
    </source>
</evidence>
<evidence type="ECO:0000255" key="3">
    <source>
        <dbReference type="PROSITE-ProRule" id="PRU00159"/>
    </source>
</evidence>
<evidence type="ECO:0000255" key="4">
    <source>
        <dbReference type="PROSITE-ProRule" id="PRU00498"/>
    </source>
</evidence>
<evidence type="ECO:0000269" key="5">
    <source>
    </source>
</evidence>
<evidence type="ECO:0000269" key="6">
    <source>
    </source>
</evidence>
<evidence type="ECO:0000269" key="7">
    <source>
    </source>
</evidence>
<evidence type="ECO:0000305" key="8"/>
<evidence type="ECO:0000312" key="9">
    <source>
        <dbReference type="EMBL" id="BAE78828.1"/>
    </source>
</evidence>
<evidence type="ECO:0000312" key="10">
    <source>
        <dbReference type="Proteomes" id="UP000001940"/>
    </source>
</evidence>
<evidence type="ECO:0000312" key="11">
    <source>
        <dbReference type="WormBase" id="C49H3.1"/>
    </source>
</evidence>
<gene>
    <name evidence="11" type="primary">gcy-8</name>
    <name evidence="11" type="ORF">C49H3.1</name>
</gene>
<comment type="function">
    <text evidence="5 6 7">Guanylate cyclase involved in the production of the second messenger cGMP (PubMed:27062922). Regulates thermotaxis responses in AFD sensory neurons (PubMed:16415369, PubMed:21315599, PubMed:27062922). May regulate AFD neuronal activity such as calcium responses to temperature gradients (PubMed:16415369, PubMed:21315599). Maintains the microvilli receptive ending morphology of the AFD thermosensory neurons by regulating cGMP levels downstream of kcc-3 (PubMed:27062922). cGMP levels antagonize the actin cytoskeleton regulator wsp-1 (PubMed:27062922).</text>
</comment>
<comment type="catalytic activity">
    <reaction evidence="7">
        <text>GTP = 3',5'-cyclic GMP + diphosphate</text>
        <dbReference type="Rhea" id="RHEA:13665"/>
        <dbReference type="ChEBI" id="CHEBI:33019"/>
        <dbReference type="ChEBI" id="CHEBI:37565"/>
        <dbReference type="ChEBI" id="CHEBI:57746"/>
        <dbReference type="EC" id="4.6.1.2"/>
    </reaction>
</comment>
<comment type="activity regulation">
    <text evidence="7">Inhibited by chloride with an IC(50) of 60 mM.</text>
</comment>
<comment type="subcellular location">
    <subcellularLocation>
        <location evidence="8">Cell membrane</location>
        <topology evidence="8">Single-pass type I membrane protein</topology>
    </subcellularLocation>
    <subcellularLocation>
        <location evidence="5">Cell projection</location>
        <location evidence="5">Cilium</location>
    </subcellularLocation>
    <text evidence="5">Localizes exclusively to the sensory ending, known as cilium, in AFD neurons.</text>
</comment>
<comment type="tissue specificity">
    <text evidence="5 7">Expressed bilaterally in AFD sensory neurons.</text>
</comment>
<comment type="domain">
    <text evidence="3 7">The protein kinase domain is predicted to be catalytically inactive. Might be required for the negative regulation of the guanylate cyclase domain (PubMed:27062922).</text>
</comment>
<comment type="domain">
    <text evidence="6 7">The guanylate cyclase domain is required for thermotaxis responses.</text>
</comment>
<comment type="similarity">
    <text evidence="2">Belongs to the adenylyl cyclase class-4/guanylyl cyclase family.</text>
</comment>
<protein>
    <recommendedName>
        <fullName evidence="8">Receptor-type guanylate cyclase gcy-8</fullName>
        <ecNumber evidence="7">4.6.1.2</ecNumber>
    </recommendedName>
</protein>
<keyword id="KW-0067">ATP-binding</keyword>
<keyword id="KW-1003">Cell membrane</keyword>
<keyword id="KW-0966">Cell projection</keyword>
<keyword id="KW-0141">cGMP biosynthesis</keyword>
<keyword id="KW-0175">Coiled coil</keyword>
<keyword id="KW-0325">Glycoprotein</keyword>
<keyword id="KW-0342">GTP-binding</keyword>
<keyword id="KW-0456">Lyase</keyword>
<keyword id="KW-0460">Magnesium</keyword>
<keyword id="KW-0472">Membrane</keyword>
<keyword id="KW-0479">Metal-binding</keyword>
<keyword id="KW-0547">Nucleotide-binding</keyword>
<keyword id="KW-0675">Receptor</keyword>
<keyword id="KW-1185">Reference proteome</keyword>
<keyword id="KW-0732">Signal</keyword>
<keyword id="KW-0812">Transmembrane</keyword>
<keyword id="KW-1133">Transmembrane helix</keyword>
<reference evidence="9" key="1">
    <citation type="journal article" date="2006" name="Genetics">
        <title>Identification of guanylyl cyclases that function in thermosensory neurons of Caenorhabditis elegans.</title>
        <authorList>
            <person name="Inada H."/>
            <person name="Ito H."/>
            <person name="Satterlee J."/>
            <person name="Sengupta P."/>
            <person name="Matsumoto K."/>
            <person name="Mori I."/>
        </authorList>
    </citation>
    <scope>NUCLEOTIDE SEQUENCE [MRNA]</scope>
    <scope>FUNCTION</scope>
    <scope>SUBCELLULAR LOCATION</scope>
    <scope>TISSUE SPECIFICITY</scope>
</reference>
<reference evidence="10" key="2">
    <citation type="journal article" date="1998" name="Science">
        <title>Genome sequence of the nematode C. elegans: a platform for investigating biology.</title>
        <authorList>
            <consortium name="The C. elegans sequencing consortium"/>
        </authorList>
    </citation>
    <scope>NUCLEOTIDE SEQUENCE [LARGE SCALE GENOMIC DNA]</scope>
    <source>
        <strain evidence="10">Bristol N2</strain>
    </source>
</reference>
<reference evidence="8" key="3">
    <citation type="journal article" date="2011" name="Curr. Biol.">
        <title>Regulation of response properties and operating range of the AFD thermosensory neurons by cGMP signaling.</title>
        <authorList>
            <person name="Wasserman S.M."/>
            <person name="Beverly M."/>
            <person name="Bell H.W."/>
            <person name="Sengupta P."/>
        </authorList>
    </citation>
    <scope>FUNCTION</scope>
    <scope>DOMAIN</scope>
</reference>
<reference key="4">
    <citation type="journal article" date="2016" name="Cell">
        <title>A glial K/Cl transporter controls neuronal receptive ending shape by chloride inhibition of an rGC.</title>
        <authorList>
            <person name="Singhvi A."/>
            <person name="Liu B."/>
            <person name="Friedman C.J."/>
            <person name="Fong J."/>
            <person name="Lu Y."/>
            <person name="Huang X.Y."/>
            <person name="Shaham S."/>
        </authorList>
    </citation>
    <scope>FUNCTION</scope>
    <scope>CATALYTIC ACTIVITY</scope>
    <scope>ACTIVITY REGULATION</scope>
    <scope>TISSUE SPECIFICITY</scope>
    <scope>DOMAIN</scope>
    <scope>MUTAGENESIS OF SER-110; CYS-141; GLY-707 AND GLU-1057</scope>
</reference>
<sequence>MRTKKAFLLLTFNVLIYLAACQETERILANNGTEDNEITTSKGVSPNTNPLFLSNSTAGLYDSKGRIRLTIGHIGAIGALRNDVKILEVSHKALQAEGILDDDLDVEIISQTGCGESYEGVAVAADMYHLQKVKAFIGPYCNAEMDAVARMAAFWNIPIIGYMAASNNLADKNAYPTLARISLRTTNSIAEATCAMLRHYGWNKVAIITNTGILAYDRVLSFEEVFHQRGINVVKKIMFDEFADSKAMIASGLLNDIKNSARIVVCLFSNTRESSREFLTAANTQGMNVNEYGYVFPWLQDGGKDASPWTGADGSMLQKVKDQYANAIIIDDVNSFDNTIVGPFIERIKDVGLTEADVDIANIYGYLYLFDALKLYAIAARKVLNETGKAENLLNGRMMWQNMRKLKFVGMVGASGIASGQVSMDDRAERAPLYRGFFVSPNSDSVLPMVHMEPTMLDNCDGIANKSGCYEIVVTDIMRDFWPSVDRKMPKDEPDCGYRNERCDYTLIIIGAALILLFIVAAVSAFFAQKILEKRALDKLPFRIYRDDLQFIDEEQLKSMLSLGSTRTKMSNMNYGSRNHAIVGTNTHAIYHKYVQRRPIVFNRADKTLIQLMKAAVHDNINPFLGMVWNEREEMLLVWKFCSRGTLQDIIYNESIQLDTKFHGAFIRDILAGLEYLHASQIGYHGSLTPWSCLIDRNWMIKLTDYGIADPLERWEKSQSISRDGLTSDDDKSQATQATSILYESPEMLKNREKNRVRRVDQDWMRQTQTRRQLGDVYAFGLVMYEIIFRALPFPEGTNQSELVEWLRDGSKVVKPTIPQNKVLNMDLSALIQDCWNTTPEMRPSLRRIKLNVETYLNIKGSLVDQMTRMMEQYANNLEKLVAERTGMLEEANQRADRLLSQLLPAYVANELKLGRPVPPKTFTSSTVLFSDIVGFTEMCQNASPLEVVAVLNGIFDGFDQFIARKDAYKVETIGDAYMVVSGVPEENGHRHINEIASIALDVHKFLSEFIVPHKRDTKVQCRLGFHTGPVAAAVVGLNAPRYCLFGDTVNMASRMESNSEPGKTQISETAKNLLLKEYPDYICEQRGEIPIKGKGLCMTYWLMGTKSEGSGRSGAYLAPSMKSAGTGFTGMLGNSANDYSLNLKNPTGLQR</sequence>
<organism evidence="10">
    <name type="scientific">Caenorhabditis elegans</name>
    <dbReference type="NCBI Taxonomy" id="6239"/>
    <lineage>
        <taxon>Eukaryota</taxon>
        <taxon>Metazoa</taxon>
        <taxon>Ecdysozoa</taxon>
        <taxon>Nematoda</taxon>
        <taxon>Chromadorea</taxon>
        <taxon>Rhabditida</taxon>
        <taxon>Rhabditina</taxon>
        <taxon>Rhabditomorpha</taxon>
        <taxon>Rhabditoidea</taxon>
        <taxon>Rhabditidae</taxon>
        <taxon>Peloderinae</taxon>
        <taxon>Caenorhabditis</taxon>
    </lineage>
</organism>